<reference key="1">
    <citation type="submission" date="2007-10" db="EMBL/GenBank/DDBJ databases">
        <title>Complete sequence of chromosome 1 of Burkholderia multivorans ATCC 17616.</title>
        <authorList>
            <person name="Copeland A."/>
            <person name="Lucas S."/>
            <person name="Lapidus A."/>
            <person name="Barry K."/>
            <person name="Glavina del Rio T."/>
            <person name="Dalin E."/>
            <person name="Tice H."/>
            <person name="Pitluck S."/>
            <person name="Chain P."/>
            <person name="Malfatti S."/>
            <person name="Shin M."/>
            <person name="Vergez L."/>
            <person name="Schmutz J."/>
            <person name="Larimer F."/>
            <person name="Land M."/>
            <person name="Hauser L."/>
            <person name="Kyrpides N."/>
            <person name="Kim E."/>
            <person name="Tiedje J."/>
            <person name="Richardson P."/>
        </authorList>
    </citation>
    <scope>NUCLEOTIDE SEQUENCE [LARGE SCALE GENOMIC DNA]</scope>
    <source>
        <strain>ATCC 17616 / 249</strain>
    </source>
</reference>
<reference key="2">
    <citation type="submission" date="2007-04" db="EMBL/GenBank/DDBJ databases">
        <title>Complete genome sequence of Burkholderia multivorans ATCC 17616.</title>
        <authorList>
            <person name="Ohtsubo Y."/>
            <person name="Yamashita A."/>
            <person name="Kurokawa K."/>
            <person name="Takami H."/>
            <person name="Yuhara S."/>
            <person name="Nishiyama E."/>
            <person name="Endo R."/>
            <person name="Miyazaki R."/>
            <person name="Ono A."/>
            <person name="Yano K."/>
            <person name="Ito M."/>
            <person name="Sota M."/>
            <person name="Yuji N."/>
            <person name="Hattori M."/>
            <person name="Tsuda M."/>
        </authorList>
    </citation>
    <scope>NUCLEOTIDE SEQUENCE [LARGE SCALE GENOMIC DNA]</scope>
    <source>
        <strain>ATCC 17616 / 249</strain>
    </source>
</reference>
<name>RS16_BURM1</name>
<evidence type="ECO:0000255" key="1">
    <source>
        <dbReference type="HAMAP-Rule" id="MF_00385"/>
    </source>
</evidence>
<evidence type="ECO:0000305" key="2"/>
<gene>
    <name evidence="1" type="primary">rpsP</name>
    <name type="ordered locus">Bmul_2234</name>
    <name type="ordered locus">BMULJ_01005</name>
</gene>
<comment type="similarity">
    <text evidence="1">Belongs to the bacterial ribosomal protein bS16 family.</text>
</comment>
<accession>A9ADT1</accession>
<protein>
    <recommendedName>
        <fullName evidence="1">Small ribosomal subunit protein bS16</fullName>
    </recommendedName>
    <alternativeName>
        <fullName evidence="2">30S ribosomal protein S16</fullName>
    </alternativeName>
</protein>
<sequence>MVIIRLARGGSKKRPFYNIVATDSRNRRDGRFIERVGFYNPVATKGEALRIAQDRLTYWQGVGAQLSPTVQRLVKEAQKAQPAA</sequence>
<dbReference type="EMBL" id="CP000868">
    <property type="protein sequence ID" value="ABX15919.1"/>
    <property type="molecule type" value="Genomic_DNA"/>
</dbReference>
<dbReference type="EMBL" id="AP009385">
    <property type="protein sequence ID" value="BAG42951.1"/>
    <property type="molecule type" value="Genomic_DNA"/>
</dbReference>
<dbReference type="RefSeq" id="WP_006400702.1">
    <property type="nucleotide sequence ID" value="NC_010804.1"/>
</dbReference>
<dbReference type="SMR" id="A9ADT1"/>
<dbReference type="STRING" id="395019.BMULJ_01005"/>
<dbReference type="GeneID" id="97033205"/>
<dbReference type="KEGG" id="bmj:BMULJ_01005"/>
<dbReference type="KEGG" id="bmu:Bmul_2234"/>
<dbReference type="eggNOG" id="COG0228">
    <property type="taxonomic scope" value="Bacteria"/>
</dbReference>
<dbReference type="HOGENOM" id="CLU_100590_5_1_4"/>
<dbReference type="Proteomes" id="UP000008815">
    <property type="component" value="Chromosome 1"/>
</dbReference>
<dbReference type="GO" id="GO:0005737">
    <property type="term" value="C:cytoplasm"/>
    <property type="evidence" value="ECO:0007669"/>
    <property type="project" value="UniProtKB-ARBA"/>
</dbReference>
<dbReference type="GO" id="GO:0015935">
    <property type="term" value="C:small ribosomal subunit"/>
    <property type="evidence" value="ECO:0007669"/>
    <property type="project" value="TreeGrafter"/>
</dbReference>
<dbReference type="GO" id="GO:0003735">
    <property type="term" value="F:structural constituent of ribosome"/>
    <property type="evidence" value="ECO:0007669"/>
    <property type="project" value="InterPro"/>
</dbReference>
<dbReference type="GO" id="GO:0006412">
    <property type="term" value="P:translation"/>
    <property type="evidence" value="ECO:0007669"/>
    <property type="project" value="UniProtKB-UniRule"/>
</dbReference>
<dbReference type="Gene3D" id="3.30.1320.10">
    <property type="match status" value="1"/>
</dbReference>
<dbReference type="HAMAP" id="MF_00385">
    <property type="entry name" value="Ribosomal_bS16"/>
    <property type="match status" value="1"/>
</dbReference>
<dbReference type="InterPro" id="IPR000307">
    <property type="entry name" value="Ribosomal_bS16"/>
</dbReference>
<dbReference type="InterPro" id="IPR023803">
    <property type="entry name" value="Ribosomal_bS16_dom_sf"/>
</dbReference>
<dbReference type="NCBIfam" id="TIGR00002">
    <property type="entry name" value="S16"/>
    <property type="match status" value="1"/>
</dbReference>
<dbReference type="PANTHER" id="PTHR12919">
    <property type="entry name" value="30S RIBOSOMAL PROTEIN S16"/>
    <property type="match status" value="1"/>
</dbReference>
<dbReference type="PANTHER" id="PTHR12919:SF20">
    <property type="entry name" value="SMALL RIBOSOMAL SUBUNIT PROTEIN BS16M"/>
    <property type="match status" value="1"/>
</dbReference>
<dbReference type="Pfam" id="PF00886">
    <property type="entry name" value="Ribosomal_S16"/>
    <property type="match status" value="1"/>
</dbReference>
<dbReference type="SUPFAM" id="SSF54565">
    <property type="entry name" value="Ribosomal protein S16"/>
    <property type="match status" value="1"/>
</dbReference>
<keyword id="KW-1185">Reference proteome</keyword>
<keyword id="KW-0687">Ribonucleoprotein</keyword>
<keyword id="KW-0689">Ribosomal protein</keyword>
<proteinExistence type="inferred from homology"/>
<organism>
    <name type="scientific">Burkholderia multivorans (strain ATCC 17616 / 249)</name>
    <dbReference type="NCBI Taxonomy" id="395019"/>
    <lineage>
        <taxon>Bacteria</taxon>
        <taxon>Pseudomonadati</taxon>
        <taxon>Pseudomonadota</taxon>
        <taxon>Betaproteobacteria</taxon>
        <taxon>Burkholderiales</taxon>
        <taxon>Burkholderiaceae</taxon>
        <taxon>Burkholderia</taxon>
        <taxon>Burkholderia cepacia complex</taxon>
    </lineage>
</organism>
<feature type="chain" id="PRO_1000196355" description="Small ribosomal subunit protein bS16">
    <location>
        <begin position="1"/>
        <end position="84"/>
    </location>
</feature>